<reference key="1">
    <citation type="journal article" date="2002" name="Science">
        <title>50 million years of genomic stasis in endosymbiotic bacteria.</title>
        <authorList>
            <person name="Tamas I."/>
            <person name="Klasson L."/>
            <person name="Canbaeck B."/>
            <person name="Naeslund A.K."/>
            <person name="Eriksson A.-S."/>
            <person name="Wernegreen J.J."/>
            <person name="Sandstroem J.P."/>
            <person name="Moran N.A."/>
            <person name="Andersson S.G.E."/>
        </authorList>
    </citation>
    <scope>NUCLEOTIDE SEQUENCE [LARGE SCALE GENOMIC DNA]</scope>
    <source>
        <strain>Sg</strain>
    </source>
</reference>
<comment type="function">
    <text evidence="1">Provides the precursors necessary for DNA synthesis. Catalyzes the biosynthesis of deoxyribonucleotides from the corresponding ribonucleotides (By similarity).</text>
</comment>
<comment type="catalytic activity">
    <reaction>
        <text>a 2'-deoxyribonucleoside 5'-diphosphate + [thioredoxin]-disulfide + H2O = a ribonucleoside 5'-diphosphate + [thioredoxin]-dithiol</text>
        <dbReference type="Rhea" id="RHEA:23252"/>
        <dbReference type="Rhea" id="RHEA-COMP:10698"/>
        <dbReference type="Rhea" id="RHEA-COMP:10700"/>
        <dbReference type="ChEBI" id="CHEBI:15377"/>
        <dbReference type="ChEBI" id="CHEBI:29950"/>
        <dbReference type="ChEBI" id="CHEBI:50058"/>
        <dbReference type="ChEBI" id="CHEBI:57930"/>
        <dbReference type="ChEBI" id="CHEBI:73316"/>
        <dbReference type="EC" id="1.17.4.1"/>
    </reaction>
</comment>
<comment type="activity regulation">
    <text evidence="1">Under complex allosteric control mediated by deoxynucleoside triphosphates and ATP binding to separate specificity and activation sites on the alpha subunit. The type of nucleotide bound at the specificity site determines substrate preference. It seems probable that ATP makes the enzyme reduce CDP and UDP, dGTP favors ADP reduction and dTTP favors GDP reduction. Stimulated by ATP and inhibited by dATP binding to the activity site (By similarity).</text>
</comment>
<comment type="subunit">
    <text evidence="1">Tetramer of two alpha and two beta subunits.</text>
</comment>
<comment type="similarity">
    <text evidence="4">Belongs to the ribonucleoside diphosphate reductase large chain family.</text>
</comment>
<protein>
    <recommendedName>
        <fullName>Ribonucleoside-diphosphate reductase subunit alpha</fullName>
        <ecNumber>1.17.4.1</ecNumber>
    </recommendedName>
    <alternativeName>
        <fullName>Ribonucleotide reductase</fullName>
    </alternativeName>
</protein>
<keyword id="KW-0021">Allosteric enzyme</keyword>
<keyword id="KW-0067">ATP-binding</keyword>
<keyword id="KW-0215">Deoxyribonucleotide synthesis</keyword>
<keyword id="KW-1015">Disulfide bond</keyword>
<keyword id="KW-0547">Nucleotide-binding</keyword>
<keyword id="KW-0560">Oxidoreductase</keyword>
<organism>
    <name type="scientific">Buchnera aphidicola subsp. Schizaphis graminum (strain Sg)</name>
    <dbReference type="NCBI Taxonomy" id="198804"/>
    <lineage>
        <taxon>Bacteria</taxon>
        <taxon>Pseudomonadati</taxon>
        <taxon>Pseudomonadota</taxon>
        <taxon>Gammaproteobacteria</taxon>
        <taxon>Enterobacterales</taxon>
        <taxon>Erwiniaceae</taxon>
        <taxon>Buchnera</taxon>
    </lineage>
</organism>
<accession>Q8K9W3</accession>
<feature type="chain" id="PRO_0000187207" description="Ribonucleoside-diphosphate reductase subunit alpha">
    <location>
        <begin position="1"/>
        <end position="763"/>
    </location>
</feature>
<feature type="domain" description="ATP-cone" evidence="3">
    <location>
        <begin position="5"/>
        <end position="95"/>
    </location>
</feature>
<feature type="active site" description="Proton acceptor" evidence="1">
    <location>
        <position position="437"/>
    </location>
</feature>
<feature type="active site" description="Cysteine radical intermediate" evidence="1">
    <location>
        <position position="439"/>
    </location>
</feature>
<feature type="active site" description="Proton acceptor" evidence="1">
    <location>
        <position position="441"/>
    </location>
</feature>
<feature type="binding site" evidence="2">
    <location>
        <position position="9"/>
    </location>
    <ligand>
        <name>ATP</name>
        <dbReference type="ChEBI" id="CHEBI:30616"/>
        <note>allosteric activator</note>
    </ligand>
</feature>
<feature type="binding site" evidence="2">
    <location>
        <begin position="15"/>
        <end position="21"/>
    </location>
    <ligand>
        <name>ATP</name>
        <dbReference type="ChEBI" id="CHEBI:30616"/>
        <note>allosteric activator</note>
    </ligand>
</feature>
<feature type="binding site" evidence="2">
    <location>
        <position position="55"/>
    </location>
    <ligand>
        <name>ATP</name>
        <dbReference type="ChEBI" id="CHEBI:30616"/>
        <note>allosteric activator</note>
    </ligand>
</feature>
<feature type="binding site" evidence="2">
    <location>
        <position position="91"/>
    </location>
    <ligand>
        <name>ATP</name>
        <dbReference type="ChEBI" id="CHEBI:30616"/>
        <note>allosteric activator</note>
    </ligand>
</feature>
<feature type="binding site" evidence="2">
    <location>
        <position position="209"/>
    </location>
    <ligand>
        <name>GDP</name>
        <dbReference type="ChEBI" id="CHEBI:58189"/>
    </ligand>
</feature>
<feature type="binding site" evidence="2">
    <location>
        <begin position="232"/>
        <end position="234"/>
    </location>
    <ligand>
        <name>dTTP</name>
        <dbReference type="ChEBI" id="CHEBI:37568"/>
        <note>allosteric effector that controls substrate specificity</note>
    </ligand>
</feature>
<feature type="binding site" evidence="2">
    <location>
        <position position="262"/>
    </location>
    <ligand>
        <name>dTTP</name>
        <dbReference type="ChEBI" id="CHEBI:37568"/>
        <note>allosteric effector that controls substrate specificity</note>
    </ligand>
</feature>
<feature type="binding site" evidence="2">
    <location>
        <position position="269"/>
    </location>
    <ligand>
        <name>dTTP</name>
        <dbReference type="ChEBI" id="CHEBI:37568"/>
        <note>allosteric effector that controls substrate specificity</note>
    </ligand>
</feature>
<feature type="binding site" evidence="2">
    <location>
        <position position="437"/>
    </location>
    <ligand>
        <name>GDP</name>
        <dbReference type="ChEBI" id="CHEBI:58189"/>
    </ligand>
</feature>
<feature type="binding site" evidence="2">
    <location>
        <position position="441"/>
    </location>
    <ligand>
        <name>GDP</name>
        <dbReference type="ChEBI" id="CHEBI:58189"/>
    </ligand>
</feature>
<feature type="binding site" evidence="2">
    <location>
        <begin position="623"/>
        <end position="625"/>
    </location>
    <ligand>
        <name>GDP</name>
        <dbReference type="ChEBI" id="CHEBI:58189"/>
    </ligand>
</feature>
<feature type="site" description="Important for hydrogen atom transfer" evidence="1">
    <location>
        <position position="225"/>
    </location>
</feature>
<feature type="site" description="Important for hydrogen atom transfer" evidence="1">
    <location>
        <position position="462"/>
    </location>
</feature>
<feature type="site" description="Important for electron transfer" evidence="1">
    <location>
        <position position="730"/>
    </location>
</feature>
<feature type="site" description="Important for electron transfer" evidence="1">
    <location>
        <position position="731"/>
    </location>
</feature>
<feature type="site" description="Interacts with thioredoxin/glutaredoxin" evidence="1">
    <location>
        <position position="756"/>
    </location>
</feature>
<feature type="site" description="Interacts with thioredoxin/glutaredoxin" evidence="1">
    <location>
        <position position="761"/>
    </location>
</feature>
<feature type="disulfide bond" description="Redox-active" evidence="1">
    <location>
        <begin position="225"/>
        <end position="462"/>
    </location>
</feature>
<evidence type="ECO:0000250" key="1"/>
<evidence type="ECO:0000250" key="2">
    <source>
        <dbReference type="UniProtKB" id="P00452"/>
    </source>
</evidence>
<evidence type="ECO:0000255" key="3">
    <source>
        <dbReference type="PROSITE-ProRule" id="PRU00492"/>
    </source>
</evidence>
<evidence type="ECO:0000305" key="4"/>
<gene>
    <name type="primary">nrdA</name>
    <name type="ordered locus">BUsg_173</name>
</gene>
<proteinExistence type="inferred from homology"/>
<dbReference type="EC" id="1.17.4.1"/>
<dbReference type="EMBL" id="AE013218">
    <property type="protein sequence ID" value="AAM67739.1"/>
    <property type="molecule type" value="Genomic_DNA"/>
</dbReference>
<dbReference type="RefSeq" id="WP_011053706.1">
    <property type="nucleotide sequence ID" value="NC_004061.1"/>
</dbReference>
<dbReference type="SMR" id="Q8K9W3"/>
<dbReference type="STRING" id="198804.BUsg_173"/>
<dbReference type="GeneID" id="93003641"/>
<dbReference type="KEGG" id="bas:BUsg_173"/>
<dbReference type="eggNOG" id="COG0209">
    <property type="taxonomic scope" value="Bacteria"/>
</dbReference>
<dbReference type="HOGENOM" id="CLU_000404_3_0_6"/>
<dbReference type="Proteomes" id="UP000000416">
    <property type="component" value="Chromosome"/>
</dbReference>
<dbReference type="GO" id="GO:0005971">
    <property type="term" value="C:ribonucleoside-diphosphate reductase complex"/>
    <property type="evidence" value="ECO:0007669"/>
    <property type="project" value="TreeGrafter"/>
</dbReference>
<dbReference type="GO" id="GO:0005524">
    <property type="term" value="F:ATP binding"/>
    <property type="evidence" value="ECO:0007669"/>
    <property type="project" value="UniProtKB-KW"/>
</dbReference>
<dbReference type="GO" id="GO:0004748">
    <property type="term" value="F:ribonucleoside-diphosphate reductase activity, thioredoxin disulfide as acceptor"/>
    <property type="evidence" value="ECO:0007669"/>
    <property type="project" value="UniProtKB-EC"/>
</dbReference>
<dbReference type="GO" id="GO:0009263">
    <property type="term" value="P:deoxyribonucleotide biosynthetic process"/>
    <property type="evidence" value="ECO:0007669"/>
    <property type="project" value="UniProtKB-KW"/>
</dbReference>
<dbReference type="FunFam" id="1.10.1650.20:FF:000001">
    <property type="entry name" value="Ribonucleoside-diphosphate reductase"/>
    <property type="match status" value="1"/>
</dbReference>
<dbReference type="Gene3D" id="1.10.1650.20">
    <property type="match status" value="1"/>
</dbReference>
<dbReference type="Gene3D" id="3.20.70.20">
    <property type="match status" value="1"/>
</dbReference>
<dbReference type="InterPro" id="IPR005144">
    <property type="entry name" value="ATP-cone_dom"/>
</dbReference>
<dbReference type="InterPro" id="IPR013346">
    <property type="entry name" value="NrdE_NrdA_C"/>
</dbReference>
<dbReference type="InterPro" id="IPR000788">
    <property type="entry name" value="RNR_lg_C"/>
</dbReference>
<dbReference type="InterPro" id="IPR013509">
    <property type="entry name" value="RNR_lsu_N"/>
</dbReference>
<dbReference type="InterPro" id="IPR008926">
    <property type="entry name" value="RNR_R1-su_N"/>
</dbReference>
<dbReference type="InterPro" id="IPR039718">
    <property type="entry name" value="Rrm1"/>
</dbReference>
<dbReference type="NCBIfam" id="TIGR02506">
    <property type="entry name" value="NrdE_NrdA"/>
    <property type="match status" value="1"/>
</dbReference>
<dbReference type="NCBIfam" id="NF006578">
    <property type="entry name" value="PRK09103.1"/>
    <property type="match status" value="1"/>
</dbReference>
<dbReference type="PANTHER" id="PTHR11573">
    <property type="entry name" value="RIBONUCLEOSIDE-DIPHOSPHATE REDUCTASE LARGE CHAIN"/>
    <property type="match status" value="1"/>
</dbReference>
<dbReference type="PANTHER" id="PTHR11573:SF6">
    <property type="entry name" value="RIBONUCLEOSIDE-DIPHOSPHATE REDUCTASE LARGE SUBUNIT"/>
    <property type="match status" value="1"/>
</dbReference>
<dbReference type="Pfam" id="PF03477">
    <property type="entry name" value="ATP-cone"/>
    <property type="match status" value="1"/>
</dbReference>
<dbReference type="Pfam" id="PF02867">
    <property type="entry name" value="Ribonuc_red_lgC"/>
    <property type="match status" value="1"/>
</dbReference>
<dbReference type="Pfam" id="PF00317">
    <property type="entry name" value="Ribonuc_red_lgN"/>
    <property type="match status" value="1"/>
</dbReference>
<dbReference type="PRINTS" id="PR01183">
    <property type="entry name" value="RIBORDTASEM1"/>
</dbReference>
<dbReference type="SUPFAM" id="SSF51998">
    <property type="entry name" value="PFL-like glycyl radical enzymes"/>
    <property type="match status" value="1"/>
</dbReference>
<dbReference type="SUPFAM" id="SSF48168">
    <property type="entry name" value="R1 subunit of ribonucleotide reductase, N-terminal domain"/>
    <property type="match status" value="1"/>
</dbReference>
<dbReference type="PROSITE" id="PS51161">
    <property type="entry name" value="ATP_CONE"/>
    <property type="match status" value="1"/>
</dbReference>
<dbReference type="PROSITE" id="PS00089">
    <property type="entry name" value="RIBORED_LARGE"/>
    <property type="match status" value="1"/>
</dbReference>
<name>RIR1_BUCAP</name>
<sequence length="763" mass="87471">MKNSLFVTKRNGKKEKINLDKIHKVLNWAAKGLENISVSQVELRSRIQFYNNISTVNIHETIIKAAADLISENTPDYQYMAARLAIFHLRKKAYGQFEPPNLYYHVKKMVQLGKYDEKLLQNYSFEEYVEMNSFVDHRRDMNFSYAAVKQLEAKYLLQNRVTGQIYESAQFLYILISACLFSKYEKKVRMNYIQRFYNAISTFKISLPTPIMSGVRTPTRQFSSCVLIECADNLNSINATTSAIVKYVSQRAGIGINAGQIRALGSPIRNGEAFHTGCIPFYKHFQSAVKSCSQGGVRGGAATVFYPIWHLEIESLLVLKNNRGIEENRVRHLDYAVQINKLMYQRMLLGQKITLFSPSDVPKLYEFFFSDQKKFKEIYIKYEKNRNIRKKSINAIDLFCLIMRERASTGRIYIQHVDHCNSHSAFNSKLATIRQSNLCLEITLPTKPLNNIDDKNGEIALCTLSALNLGLINDLHDLKELSTLSVRALDEILEYQNYPVVCAKKSAISRRSLGIGVINFAYYLAKNKVRYSDGSAKNLTHKTFEAIQYYLLKASCELAKEKGSCSLFNQTNYYLGKFPIDTYKKDIDSICNEPLHLNWNLLRKKIKKYGLRNSTLSALMPSETSSQISNATNGIEPPRGFISIKSSKDGMLRQVVPEYKKLKSEYELLWEIPNNIGYLELVAIMQKFVDQSISANTNYDPKRFLNEKIPMKQLIYDLLVAYKLGIKTLYYQNTRDGAEDNQNLNKSIENIKEDNCTSGSCTI</sequence>